<comment type="induction">
    <text evidence="1">Expressed at low levels in exponential phase in rich medium (at protein level).</text>
</comment>
<name>YQIM_ECOLI</name>
<accession>P0DSG5</accession>
<accession>A0A7H2C793</accession>
<feature type="chain" id="PRO_0000447165" description="Protein YqiM">
    <location>
        <begin position="1"/>
        <end position="27"/>
    </location>
</feature>
<keyword id="KW-1185">Reference proteome</keyword>
<evidence type="ECO:0000269" key="1">
    <source>
    </source>
</evidence>
<evidence type="ECO:0000303" key="2">
    <source>
    </source>
</evidence>
<evidence type="ECO:0000312" key="3">
    <source>
        <dbReference type="EMBL" id="QNV50540.1"/>
    </source>
</evidence>
<reference key="1">
    <citation type="journal article" date="1997" name="Science">
        <title>The complete genome sequence of Escherichia coli K-12.</title>
        <authorList>
            <person name="Blattner F.R."/>
            <person name="Plunkett G. III"/>
            <person name="Bloch C.A."/>
            <person name="Perna N.T."/>
            <person name="Burland V."/>
            <person name="Riley M."/>
            <person name="Collado-Vides J."/>
            <person name="Glasner J.D."/>
            <person name="Rode C.K."/>
            <person name="Mayhew G.F."/>
            <person name="Gregor J."/>
            <person name="Davis N.W."/>
            <person name="Kirkpatrick H.A."/>
            <person name="Goeden M.A."/>
            <person name="Rose D.J."/>
            <person name="Mau B."/>
            <person name="Shao Y."/>
        </authorList>
    </citation>
    <scope>NUCLEOTIDE SEQUENCE [LARGE SCALE GENOMIC DNA]</scope>
    <source>
        <strain>K12 / MG1655 / ATCC 47076</strain>
    </source>
</reference>
<reference key="2">
    <citation type="journal article" date="2019" name="MBio">
        <title>Identifying small proteins by ribosome profiling with stalled initiation complexes.</title>
        <authorList>
            <person name="Weaver J."/>
            <person name="Mohammad F."/>
            <person name="Buskirk A.R."/>
            <person name="Storz G."/>
        </authorList>
    </citation>
    <scope>IDENTIFICATION</scope>
    <scope>INDUCTION</scope>
    <source>
        <strain>K12 / MG1655 / ATCC 47076</strain>
    </source>
</reference>
<dbReference type="EMBL" id="U00096">
    <property type="protein sequence ID" value="QNV50540.1"/>
    <property type="molecule type" value="Genomic_DNA"/>
</dbReference>
<dbReference type="InParanoid" id="P0DSG5"/>
<dbReference type="BioCyc" id="EcoCyc:MONOMER0-4499"/>
<dbReference type="Proteomes" id="UP000000625">
    <property type="component" value="Chromosome"/>
</dbReference>
<dbReference type="Pfam" id="PF23507">
    <property type="entry name" value="YqiM"/>
    <property type="match status" value="1"/>
</dbReference>
<gene>
    <name evidence="2" type="primary">yqiM</name>
    <name evidence="3" type="ordered locus">b4787</name>
</gene>
<organism>
    <name type="scientific">Escherichia coli (strain K12)</name>
    <dbReference type="NCBI Taxonomy" id="83333"/>
    <lineage>
        <taxon>Bacteria</taxon>
        <taxon>Pseudomonadati</taxon>
        <taxon>Pseudomonadota</taxon>
        <taxon>Gammaproteobacteria</taxon>
        <taxon>Enterobacterales</taxon>
        <taxon>Enterobacteriaceae</taxon>
        <taxon>Escherichia</taxon>
    </lineage>
</organism>
<sequence>MLMYQTRRTYQNSNNIAVVHLLKPAWR</sequence>
<protein>
    <recommendedName>
        <fullName evidence="2">Protein YqiM</fullName>
    </recommendedName>
</protein>
<proteinExistence type="evidence at protein level"/>